<sequence length="104" mass="11311">MAAKIRREDEVIVLAGKDKGKRAKVSQVLPTGKLILEGINLVKKHQKPNPQLGVAGGIVEKEAPIQASNVAIFNSATGKADRVGFRFEDGKKVRFFKSNSELVK</sequence>
<name>RL24_SHEPC</name>
<reference key="1">
    <citation type="submission" date="2007-04" db="EMBL/GenBank/DDBJ databases">
        <title>Complete sequence of Shewanella putrefaciens CN-32.</title>
        <authorList>
            <consortium name="US DOE Joint Genome Institute"/>
            <person name="Copeland A."/>
            <person name="Lucas S."/>
            <person name="Lapidus A."/>
            <person name="Barry K."/>
            <person name="Detter J.C."/>
            <person name="Glavina del Rio T."/>
            <person name="Hammon N."/>
            <person name="Israni S."/>
            <person name="Dalin E."/>
            <person name="Tice H."/>
            <person name="Pitluck S."/>
            <person name="Chain P."/>
            <person name="Malfatti S."/>
            <person name="Shin M."/>
            <person name="Vergez L."/>
            <person name="Schmutz J."/>
            <person name="Larimer F."/>
            <person name="Land M."/>
            <person name="Hauser L."/>
            <person name="Kyrpides N."/>
            <person name="Mikhailova N."/>
            <person name="Romine M.F."/>
            <person name="Fredrickson J."/>
            <person name="Tiedje J."/>
            <person name="Richardson P."/>
        </authorList>
    </citation>
    <scope>NUCLEOTIDE SEQUENCE [LARGE SCALE GENOMIC DNA]</scope>
    <source>
        <strain>CN-32 / ATCC BAA-453</strain>
    </source>
</reference>
<comment type="function">
    <text evidence="1">One of two assembly initiator proteins, it binds directly to the 5'-end of the 23S rRNA, where it nucleates assembly of the 50S subunit.</text>
</comment>
<comment type="function">
    <text evidence="1">One of the proteins that surrounds the polypeptide exit tunnel on the outside of the subunit.</text>
</comment>
<comment type="subunit">
    <text evidence="1">Part of the 50S ribosomal subunit.</text>
</comment>
<comment type="similarity">
    <text evidence="1">Belongs to the universal ribosomal protein uL24 family.</text>
</comment>
<organism>
    <name type="scientific">Shewanella putrefaciens (strain CN-32 / ATCC BAA-453)</name>
    <dbReference type="NCBI Taxonomy" id="319224"/>
    <lineage>
        <taxon>Bacteria</taxon>
        <taxon>Pseudomonadati</taxon>
        <taxon>Pseudomonadota</taxon>
        <taxon>Gammaproteobacteria</taxon>
        <taxon>Alteromonadales</taxon>
        <taxon>Shewanellaceae</taxon>
        <taxon>Shewanella</taxon>
    </lineage>
</organism>
<dbReference type="EMBL" id="CP000681">
    <property type="protein sequence ID" value="ABP77455.1"/>
    <property type="molecule type" value="Genomic_DNA"/>
</dbReference>
<dbReference type="SMR" id="A4YBX2"/>
<dbReference type="STRING" id="319224.Sputcn32_3748"/>
<dbReference type="KEGG" id="spc:Sputcn32_3748"/>
<dbReference type="eggNOG" id="COG0198">
    <property type="taxonomic scope" value="Bacteria"/>
</dbReference>
<dbReference type="HOGENOM" id="CLU_093315_2_2_6"/>
<dbReference type="GO" id="GO:1990904">
    <property type="term" value="C:ribonucleoprotein complex"/>
    <property type="evidence" value="ECO:0007669"/>
    <property type="project" value="UniProtKB-KW"/>
</dbReference>
<dbReference type="GO" id="GO:0005840">
    <property type="term" value="C:ribosome"/>
    <property type="evidence" value="ECO:0007669"/>
    <property type="project" value="UniProtKB-KW"/>
</dbReference>
<dbReference type="GO" id="GO:0019843">
    <property type="term" value="F:rRNA binding"/>
    <property type="evidence" value="ECO:0007669"/>
    <property type="project" value="UniProtKB-UniRule"/>
</dbReference>
<dbReference type="GO" id="GO:0003735">
    <property type="term" value="F:structural constituent of ribosome"/>
    <property type="evidence" value="ECO:0007669"/>
    <property type="project" value="InterPro"/>
</dbReference>
<dbReference type="GO" id="GO:0006412">
    <property type="term" value="P:translation"/>
    <property type="evidence" value="ECO:0007669"/>
    <property type="project" value="UniProtKB-UniRule"/>
</dbReference>
<dbReference type="CDD" id="cd06089">
    <property type="entry name" value="KOW_RPL26"/>
    <property type="match status" value="1"/>
</dbReference>
<dbReference type="FunFam" id="2.30.30.30:FF:000004">
    <property type="entry name" value="50S ribosomal protein L24"/>
    <property type="match status" value="1"/>
</dbReference>
<dbReference type="Gene3D" id="2.30.30.30">
    <property type="match status" value="1"/>
</dbReference>
<dbReference type="HAMAP" id="MF_01326_B">
    <property type="entry name" value="Ribosomal_uL24_B"/>
    <property type="match status" value="1"/>
</dbReference>
<dbReference type="InterPro" id="IPR005824">
    <property type="entry name" value="KOW"/>
</dbReference>
<dbReference type="InterPro" id="IPR014722">
    <property type="entry name" value="Rib_uL2_dom2"/>
</dbReference>
<dbReference type="InterPro" id="IPR003256">
    <property type="entry name" value="Ribosomal_uL24"/>
</dbReference>
<dbReference type="InterPro" id="IPR005825">
    <property type="entry name" value="Ribosomal_uL24_CS"/>
</dbReference>
<dbReference type="InterPro" id="IPR041988">
    <property type="entry name" value="Ribosomal_uL24_KOW"/>
</dbReference>
<dbReference type="InterPro" id="IPR008991">
    <property type="entry name" value="Translation_prot_SH3-like_sf"/>
</dbReference>
<dbReference type="NCBIfam" id="TIGR01079">
    <property type="entry name" value="rplX_bact"/>
    <property type="match status" value="1"/>
</dbReference>
<dbReference type="PANTHER" id="PTHR12903">
    <property type="entry name" value="MITOCHONDRIAL RIBOSOMAL PROTEIN L24"/>
    <property type="match status" value="1"/>
</dbReference>
<dbReference type="Pfam" id="PF00467">
    <property type="entry name" value="KOW"/>
    <property type="match status" value="1"/>
</dbReference>
<dbReference type="Pfam" id="PF17136">
    <property type="entry name" value="ribosomal_L24"/>
    <property type="match status" value="1"/>
</dbReference>
<dbReference type="SMART" id="SM00739">
    <property type="entry name" value="KOW"/>
    <property type="match status" value="1"/>
</dbReference>
<dbReference type="SUPFAM" id="SSF50104">
    <property type="entry name" value="Translation proteins SH3-like domain"/>
    <property type="match status" value="1"/>
</dbReference>
<dbReference type="PROSITE" id="PS01108">
    <property type="entry name" value="RIBOSOMAL_L24"/>
    <property type="match status" value="1"/>
</dbReference>
<accession>A4YBX2</accession>
<protein>
    <recommendedName>
        <fullName evidence="1">Large ribosomal subunit protein uL24</fullName>
    </recommendedName>
    <alternativeName>
        <fullName evidence="2">50S ribosomal protein L24</fullName>
    </alternativeName>
</protein>
<keyword id="KW-0687">Ribonucleoprotein</keyword>
<keyword id="KW-0689">Ribosomal protein</keyword>
<keyword id="KW-0694">RNA-binding</keyword>
<keyword id="KW-0699">rRNA-binding</keyword>
<gene>
    <name evidence="1" type="primary">rplX</name>
    <name type="ordered locus">Sputcn32_3748</name>
</gene>
<feature type="chain" id="PRO_1000052308" description="Large ribosomal subunit protein uL24">
    <location>
        <begin position="1"/>
        <end position="104"/>
    </location>
</feature>
<proteinExistence type="inferred from homology"/>
<evidence type="ECO:0000255" key="1">
    <source>
        <dbReference type="HAMAP-Rule" id="MF_01326"/>
    </source>
</evidence>
<evidence type="ECO:0000305" key="2"/>